<feature type="chain" id="PRO_0000144337" description="ATP synthase subunit alpha">
    <location>
        <begin position="1"/>
        <end position="518"/>
    </location>
</feature>
<feature type="binding site" evidence="1">
    <location>
        <begin position="169"/>
        <end position="176"/>
    </location>
    <ligand>
        <name>ATP</name>
        <dbReference type="ChEBI" id="CHEBI:30616"/>
    </ligand>
</feature>
<feature type="site" description="Required for activity" evidence="1">
    <location>
        <position position="362"/>
    </location>
</feature>
<feature type="sequence conflict" description="In Ref. 3; CAA83571." evidence="2" ref="3">
    <original>LGE</original>
    <variation>WEN</variation>
    <location>
        <begin position="111"/>
        <end position="113"/>
    </location>
</feature>
<proteinExistence type="inferred from homology"/>
<reference key="1">
    <citation type="journal article" date="1996" name="Nucleic Acids Res.">
        <title>Sequence analysis of 56 kb from the genome of the bacterium Mycoplasma pneumoniae comprising the dnaA region, the atp operon and a cluster of ribosomal protein genes.</title>
        <authorList>
            <person name="Hilbert H."/>
            <person name="Himmelreich R."/>
            <person name="Plagens H."/>
            <person name="Herrmann R."/>
        </authorList>
    </citation>
    <scope>NUCLEOTIDE SEQUENCE [GENOMIC DNA]</scope>
    <source>
        <strain>ATCC 29342 / M129 / Subtype 1</strain>
    </source>
</reference>
<reference key="2">
    <citation type="journal article" date="1996" name="Nucleic Acids Res.">
        <title>Complete sequence analysis of the genome of the bacterium Mycoplasma pneumoniae.</title>
        <authorList>
            <person name="Himmelreich R."/>
            <person name="Hilbert H."/>
            <person name="Plagens H."/>
            <person name="Pirkl E."/>
            <person name="Li B.-C."/>
            <person name="Herrmann R."/>
        </authorList>
    </citation>
    <scope>NUCLEOTIDE SEQUENCE [LARGE SCALE GENOMIC DNA]</scope>
    <source>
        <strain>ATCC 29342 / M129 / Subtype 1</strain>
    </source>
</reference>
<reference key="3">
    <citation type="journal article" date="1994" name="Mol. Microbiol.">
        <title>Identification and characterization of hitherto unknown Mycoplasma pneumoniae proteins.</title>
        <authorList>
            <person name="Proft T."/>
            <person name="Herrmann R."/>
        </authorList>
    </citation>
    <scope>NUCLEOTIDE SEQUENCE [GENOMIC DNA] OF 23-113</scope>
    <source>
        <strain>ATCC 29342 / M129 / Subtype 1</strain>
    </source>
</reference>
<gene>
    <name evidence="1" type="primary">atpA</name>
    <name type="ordered locus">MPN_600</name>
    <name type="ORF">MP242</name>
</gene>
<accession>Q50329</accession>
<accession>Q50344</accession>
<keyword id="KW-0066">ATP synthesis</keyword>
<keyword id="KW-0067">ATP-binding</keyword>
<keyword id="KW-1003">Cell membrane</keyword>
<keyword id="KW-0139">CF(1)</keyword>
<keyword id="KW-0375">Hydrogen ion transport</keyword>
<keyword id="KW-0406">Ion transport</keyword>
<keyword id="KW-0472">Membrane</keyword>
<keyword id="KW-0547">Nucleotide-binding</keyword>
<keyword id="KW-1185">Reference proteome</keyword>
<keyword id="KW-1278">Translocase</keyword>
<keyword id="KW-0813">Transport</keyword>
<evidence type="ECO:0000255" key="1">
    <source>
        <dbReference type="HAMAP-Rule" id="MF_01346"/>
    </source>
</evidence>
<evidence type="ECO:0000305" key="2"/>
<protein>
    <recommendedName>
        <fullName evidence="1">ATP synthase subunit alpha</fullName>
        <ecNumber evidence="1">7.1.2.2</ecNumber>
    </recommendedName>
    <alternativeName>
        <fullName evidence="1">ATP synthase F1 sector subunit alpha</fullName>
    </alternativeName>
    <alternativeName>
        <fullName evidence="1">F-ATPase subunit alpha</fullName>
    </alternativeName>
</protein>
<organism>
    <name type="scientific">Mycoplasma pneumoniae (strain ATCC 29342 / M129 / Subtype 1)</name>
    <name type="common">Mycoplasmoides pneumoniae</name>
    <dbReference type="NCBI Taxonomy" id="272634"/>
    <lineage>
        <taxon>Bacteria</taxon>
        <taxon>Bacillati</taxon>
        <taxon>Mycoplasmatota</taxon>
        <taxon>Mycoplasmoidales</taxon>
        <taxon>Mycoplasmoidaceae</taxon>
        <taxon>Mycoplasmoides</taxon>
    </lineage>
</organism>
<sequence length="518" mass="57375">MADKLNEYVALIKNEIKKYSKQIFNSEIGKVISVADGIAKVSGLENALLNELIEFENNVQGIALNLEQNTVGVALFGDYSKIREGSTAKRTHNVMQTPVGDVMLGRIVNALGEPVDGRGPIKAEEFDQVEKIAPGVMTRKTVNQPLETGILTIDALFPIGKGQRELIVGDRQTGKTSIAIDTIINQRGKDVYCVYVAMGQKNSSVAQIVHQLEVTDSMKYTTVVCATASDPASMIYLTPFTGITIAEYWLKQGKDVLIVFDDLSKHAIAYRTLSLLLRRPPGREAFPGDVFYLHSRLLERACRLNEEHGGGSITALPIIETQAGDISAYIPTNVISITDGQLFMVSNLFNSGQRPAIHVGLSVSRVGSAAQIKAIKQQTGSLKLELAQYSELDSFSQFGSDLDENTKQILERGKRVMEMIKQPNGKPYSQTHEALFLFAIAKSFIKFIPLDYIAKFKQRIMEEFDKEHPIYKEIATQKSFSEALEAQTNTAFKALVKRFVSALPDYDITKYGTMEELE</sequence>
<comment type="function">
    <text evidence="1">Produces ATP from ADP in the presence of a proton gradient across the membrane. The alpha chain is a regulatory subunit.</text>
</comment>
<comment type="catalytic activity">
    <reaction evidence="1">
        <text>ATP + H2O + 4 H(+)(in) = ADP + phosphate + 5 H(+)(out)</text>
        <dbReference type="Rhea" id="RHEA:57720"/>
        <dbReference type="ChEBI" id="CHEBI:15377"/>
        <dbReference type="ChEBI" id="CHEBI:15378"/>
        <dbReference type="ChEBI" id="CHEBI:30616"/>
        <dbReference type="ChEBI" id="CHEBI:43474"/>
        <dbReference type="ChEBI" id="CHEBI:456216"/>
        <dbReference type="EC" id="7.1.2.2"/>
    </reaction>
</comment>
<comment type="subunit">
    <text evidence="1">F-type ATPases have 2 components, CF(1) - the catalytic core - and CF(0) - the membrane proton channel. CF(1) has five subunits: alpha(3), beta(3), gamma(1), delta(1), epsilon(1). CF(0) has three main subunits: a(1), b(2) and c(9-12). The alpha and beta chains form an alternating ring which encloses part of the gamma chain. CF(1) is attached to CF(0) by a central stalk formed by the gamma and epsilon chains, while a peripheral stalk is formed by the delta and b chains.</text>
</comment>
<comment type="subcellular location">
    <subcellularLocation>
        <location evidence="1">Cell membrane</location>
        <topology evidence="1">Peripheral membrane protein</topology>
    </subcellularLocation>
</comment>
<comment type="similarity">
    <text evidence="1">Belongs to the ATPase alpha/beta chains family.</text>
</comment>
<dbReference type="EC" id="7.1.2.2" evidence="1"/>
<dbReference type="EMBL" id="U43738">
    <property type="protein sequence ID" value="AAC43657.1"/>
    <property type="molecule type" value="Genomic_DNA"/>
</dbReference>
<dbReference type="EMBL" id="U00089">
    <property type="protein sequence ID" value="AAB95890.1"/>
    <property type="molecule type" value="Genomic_DNA"/>
</dbReference>
<dbReference type="EMBL" id="Z32649">
    <property type="protein sequence ID" value="CAA83571.1"/>
    <property type="molecule type" value="Genomic_DNA"/>
</dbReference>
<dbReference type="PIR" id="S62847">
    <property type="entry name" value="S62847"/>
</dbReference>
<dbReference type="RefSeq" id="NP_110289.1">
    <property type="nucleotide sequence ID" value="NC_000912.1"/>
</dbReference>
<dbReference type="RefSeq" id="WP_010874957.1">
    <property type="nucleotide sequence ID" value="NZ_OU342337.1"/>
</dbReference>
<dbReference type="SMR" id="Q50329"/>
<dbReference type="IntAct" id="Q50329">
    <property type="interactions" value="2"/>
</dbReference>
<dbReference type="STRING" id="272634.MPN_600"/>
<dbReference type="EnsemblBacteria" id="AAB95890">
    <property type="protein sequence ID" value="AAB95890"/>
    <property type="gene ID" value="MPN_600"/>
</dbReference>
<dbReference type="KEGG" id="mpn:MPN_600"/>
<dbReference type="PATRIC" id="fig|272634.6.peg.663"/>
<dbReference type="HOGENOM" id="CLU_010091_2_1_14"/>
<dbReference type="OrthoDB" id="9803053at2"/>
<dbReference type="BioCyc" id="MetaCyc:MONOMER-538"/>
<dbReference type="BioCyc" id="MPNE272634:G1GJ3-975-MONOMER"/>
<dbReference type="Proteomes" id="UP000000808">
    <property type="component" value="Chromosome"/>
</dbReference>
<dbReference type="GO" id="GO:0005886">
    <property type="term" value="C:plasma membrane"/>
    <property type="evidence" value="ECO:0007669"/>
    <property type="project" value="UniProtKB-SubCell"/>
</dbReference>
<dbReference type="GO" id="GO:0045259">
    <property type="term" value="C:proton-transporting ATP synthase complex"/>
    <property type="evidence" value="ECO:0007669"/>
    <property type="project" value="UniProtKB-KW"/>
</dbReference>
<dbReference type="GO" id="GO:0043531">
    <property type="term" value="F:ADP binding"/>
    <property type="evidence" value="ECO:0007669"/>
    <property type="project" value="TreeGrafter"/>
</dbReference>
<dbReference type="GO" id="GO:0005524">
    <property type="term" value="F:ATP binding"/>
    <property type="evidence" value="ECO:0007669"/>
    <property type="project" value="UniProtKB-UniRule"/>
</dbReference>
<dbReference type="GO" id="GO:0046933">
    <property type="term" value="F:proton-transporting ATP synthase activity, rotational mechanism"/>
    <property type="evidence" value="ECO:0007669"/>
    <property type="project" value="UniProtKB-UniRule"/>
</dbReference>
<dbReference type="CDD" id="cd18113">
    <property type="entry name" value="ATP-synt_F1_alpha_C"/>
    <property type="match status" value="1"/>
</dbReference>
<dbReference type="CDD" id="cd18116">
    <property type="entry name" value="ATP-synt_F1_alpha_N"/>
    <property type="match status" value="1"/>
</dbReference>
<dbReference type="CDD" id="cd01132">
    <property type="entry name" value="F1-ATPase_alpha_CD"/>
    <property type="match status" value="1"/>
</dbReference>
<dbReference type="FunFam" id="3.40.50.300:FF:000002">
    <property type="entry name" value="ATP synthase subunit alpha"/>
    <property type="match status" value="1"/>
</dbReference>
<dbReference type="Gene3D" id="2.40.30.20">
    <property type="match status" value="1"/>
</dbReference>
<dbReference type="Gene3D" id="1.20.150.20">
    <property type="entry name" value="ATP synthase alpha/beta chain, C-terminal domain"/>
    <property type="match status" value="1"/>
</dbReference>
<dbReference type="Gene3D" id="3.40.50.300">
    <property type="entry name" value="P-loop containing nucleotide triphosphate hydrolases"/>
    <property type="match status" value="1"/>
</dbReference>
<dbReference type="HAMAP" id="MF_01346">
    <property type="entry name" value="ATP_synth_alpha_bact"/>
    <property type="match status" value="1"/>
</dbReference>
<dbReference type="InterPro" id="IPR023366">
    <property type="entry name" value="ATP_synth_asu-like_sf"/>
</dbReference>
<dbReference type="InterPro" id="IPR000793">
    <property type="entry name" value="ATP_synth_asu_C"/>
</dbReference>
<dbReference type="InterPro" id="IPR038376">
    <property type="entry name" value="ATP_synth_asu_C_sf"/>
</dbReference>
<dbReference type="InterPro" id="IPR033732">
    <property type="entry name" value="ATP_synth_F1_a_nt-bd_dom"/>
</dbReference>
<dbReference type="InterPro" id="IPR005294">
    <property type="entry name" value="ATP_synth_F1_asu"/>
</dbReference>
<dbReference type="InterPro" id="IPR020003">
    <property type="entry name" value="ATPase_a/bsu_AS"/>
</dbReference>
<dbReference type="InterPro" id="IPR004100">
    <property type="entry name" value="ATPase_F1/V1/A1_a/bsu_N"/>
</dbReference>
<dbReference type="InterPro" id="IPR036121">
    <property type="entry name" value="ATPase_F1/V1/A1_a/bsu_N_sf"/>
</dbReference>
<dbReference type="InterPro" id="IPR000194">
    <property type="entry name" value="ATPase_F1/V1/A1_a/bsu_nucl-bd"/>
</dbReference>
<dbReference type="InterPro" id="IPR027417">
    <property type="entry name" value="P-loop_NTPase"/>
</dbReference>
<dbReference type="NCBIfam" id="TIGR00962">
    <property type="entry name" value="atpA"/>
    <property type="match status" value="1"/>
</dbReference>
<dbReference type="NCBIfam" id="NF009884">
    <property type="entry name" value="PRK13343.1"/>
    <property type="match status" value="1"/>
</dbReference>
<dbReference type="PANTHER" id="PTHR48082">
    <property type="entry name" value="ATP SYNTHASE SUBUNIT ALPHA, MITOCHONDRIAL"/>
    <property type="match status" value="1"/>
</dbReference>
<dbReference type="PANTHER" id="PTHR48082:SF2">
    <property type="entry name" value="ATP SYNTHASE SUBUNIT ALPHA, MITOCHONDRIAL"/>
    <property type="match status" value="1"/>
</dbReference>
<dbReference type="Pfam" id="PF00006">
    <property type="entry name" value="ATP-synt_ab"/>
    <property type="match status" value="1"/>
</dbReference>
<dbReference type="Pfam" id="PF00306">
    <property type="entry name" value="ATP-synt_ab_C"/>
    <property type="match status" value="1"/>
</dbReference>
<dbReference type="Pfam" id="PF02874">
    <property type="entry name" value="ATP-synt_ab_N"/>
    <property type="match status" value="1"/>
</dbReference>
<dbReference type="SUPFAM" id="SSF47917">
    <property type="entry name" value="C-terminal domain of alpha and beta subunits of F1 ATP synthase"/>
    <property type="match status" value="1"/>
</dbReference>
<dbReference type="SUPFAM" id="SSF50615">
    <property type="entry name" value="N-terminal domain of alpha and beta subunits of F1 ATP synthase"/>
    <property type="match status" value="1"/>
</dbReference>
<dbReference type="SUPFAM" id="SSF52540">
    <property type="entry name" value="P-loop containing nucleoside triphosphate hydrolases"/>
    <property type="match status" value="1"/>
</dbReference>
<dbReference type="PROSITE" id="PS00152">
    <property type="entry name" value="ATPASE_ALPHA_BETA"/>
    <property type="match status" value="1"/>
</dbReference>
<name>ATPA_MYCPN</name>